<sequence length="460" mass="51274">MKLWGGRFQKTTDSLVEDFHSSISFDQRLYKQDIRGSIAHATMLGKVGIISLEEAAQIVTGLKQILEEIEAGKVEFDVAAEDIHMNVEQLLTAKIGAVGKKLHTARSRNDQVAVDIRMYLKDEIIEIRALLKELVETLLNLAEQHTNTVMPGYTHMQRAQPITFAHHLMAYSQMFMRDMGRLTDCYKRTDVMPLGSGALAGTTFPLDREYTAELLGFAAVSDNSLDAVSDRDFAVEFCAAASLIMMHLSRFCEEIILWATGEFAFIDLDDAYSTGSSIMPQKKNPDVAELIRGKTGRVYGDLMGLLTMLKGLPMAYNKDMQEDKEALFDAMDTVKGCLMVFRPMLATMTVRQENMAKAARGGFTNATDVADYLAKKGVPFREAHEVVGKAVFYCLQQNKALEELTLEEYKELSPVFEDDIYAAIGVEYCVAARKVRGGPAPEAVQQAITRTKERLKQLGE</sequence>
<feature type="chain" id="PRO_1000070920" description="Argininosuccinate lyase">
    <location>
        <begin position="1"/>
        <end position="460"/>
    </location>
</feature>
<proteinExistence type="inferred from homology"/>
<keyword id="KW-0028">Amino-acid biosynthesis</keyword>
<keyword id="KW-0055">Arginine biosynthesis</keyword>
<keyword id="KW-0963">Cytoplasm</keyword>
<keyword id="KW-0456">Lyase</keyword>
<keyword id="KW-1185">Reference proteome</keyword>
<reference key="1">
    <citation type="submission" date="2007-03" db="EMBL/GenBank/DDBJ databases">
        <title>Complete sequence of Desulfotomaculum reducens MI-1.</title>
        <authorList>
            <consortium name="US DOE Joint Genome Institute"/>
            <person name="Copeland A."/>
            <person name="Lucas S."/>
            <person name="Lapidus A."/>
            <person name="Barry K."/>
            <person name="Detter J.C."/>
            <person name="Glavina del Rio T."/>
            <person name="Hammon N."/>
            <person name="Israni S."/>
            <person name="Dalin E."/>
            <person name="Tice H."/>
            <person name="Pitluck S."/>
            <person name="Sims D."/>
            <person name="Brettin T."/>
            <person name="Bruce D."/>
            <person name="Han C."/>
            <person name="Tapia R."/>
            <person name="Schmutz J."/>
            <person name="Larimer F."/>
            <person name="Land M."/>
            <person name="Hauser L."/>
            <person name="Kyrpides N."/>
            <person name="Kim E."/>
            <person name="Tebo B.M."/>
            <person name="Richardson P."/>
        </authorList>
    </citation>
    <scope>NUCLEOTIDE SEQUENCE [LARGE SCALE GENOMIC DNA]</scope>
    <source>
        <strain>ATCC BAA-1160 / DSM 100696 / MI-1</strain>
    </source>
</reference>
<protein>
    <recommendedName>
        <fullName evidence="1">Argininosuccinate lyase</fullName>
        <shortName evidence="1">ASAL</shortName>
        <ecNumber evidence="1">4.3.2.1</ecNumber>
    </recommendedName>
    <alternativeName>
        <fullName evidence="1">Arginosuccinase</fullName>
    </alternativeName>
</protein>
<organism>
    <name type="scientific">Desulforamulus reducens (strain ATCC BAA-1160 / DSM 100696 / MI-1)</name>
    <name type="common">Desulfotomaculum reducens</name>
    <dbReference type="NCBI Taxonomy" id="349161"/>
    <lineage>
        <taxon>Bacteria</taxon>
        <taxon>Bacillati</taxon>
        <taxon>Bacillota</taxon>
        <taxon>Clostridia</taxon>
        <taxon>Eubacteriales</taxon>
        <taxon>Peptococcaceae</taxon>
        <taxon>Desulforamulus</taxon>
    </lineage>
</organism>
<dbReference type="EC" id="4.3.2.1" evidence="1"/>
<dbReference type="EMBL" id="CP000612">
    <property type="protein sequence ID" value="ABO48827.1"/>
    <property type="molecule type" value="Genomic_DNA"/>
</dbReference>
<dbReference type="RefSeq" id="WP_011876665.1">
    <property type="nucleotide sequence ID" value="NC_009253.1"/>
</dbReference>
<dbReference type="SMR" id="A4J174"/>
<dbReference type="STRING" id="349161.Dred_0278"/>
<dbReference type="KEGG" id="drm:Dred_0278"/>
<dbReference type="eggNOG" id="COG0165">
    <property type="taxonomic scope" value="Bacteria"/>
</dbReference>
<dbReference type="HOGENOM" id="CLU_027272_2_3_9"/>
<dbReference type="OrthoDB" id="9769623at2"/>
<dbReference type="UniPathway" id="UPA00068">
    <property type="reaction ID" value="UER00114"/>
</dbReference>
<dbReference type="Proteomes" id="UP000001556">
    <property type="component" value="Chromosome"/>
</dbReference>
<dbReference type="GO" id="GO:0005829">
    <property type="term" value="C:cytosol"/>
    <property type="evidence" value="ECO:0007669"/>
    <property type="project" value="TreeGrafter"/>
</dbReference>
<dbReference type="GO" id="GO:0004056">
    <property type="term" value="F:argininosuccinate lyase activity"/>
    <property type="evidence" value="ECO:0007669"/>
    <property type="project" value="UniProtKB-UniRule"/>
</dbReference>
<dbReference type="GO" id="GO:0042450">
    <property type="term" value="P:arginine biosynthetic process via ornithine"/>
    <property type="evidence" value="ECO:0007669"/>
    <property type="project" value="InterPro"/>
</dbReference>
<dbReference type="GO" id="GO:0006526">
    <property type="term" value="P:L-arginine biosynthetic process"/>
    <property type="evidence" value="ECO:0007669"/>
    <property type="project" value="UniProtKB-UniRule"/>
</dbReference>
<dbReference type="CDD" id="cd01359">
    <property type="entry name" value="Argininosuccinate_lyase"/>
    <property type="match status" value="1"/>
</dbReference>
<dbReference type="FunFam" id="1.10.275.10:FF:000002">
    <property type="entry name" value="Argininosuccinate lyase"/>
    <property type="match status" value="1"/>
</dbReference>
<dbReference type="FunFam" id="1.10.40.30:FF:000001">
    <property type="entry name" value="Argininosuccinate lyase"/>
    <property type="match status" value="1"/>
</dbReference>
<dbReference type="FunFam" id="1.20.200.10:FF:000006">
    <property type="entry name" value="Argininosuccinate lyase"/>
    <property type="match status" value="1"/>
</dbReference>
<dbReference type="Gene3D" id="1.10.40.30">
    <property type="entry name" value="Fumarase/aspartase (C-terminal domain)"/>
    <property type="match status" value="1"/>
</dbReference>
<dbReference type="Gene3D" id="1.20.200.10">
    <property type="entry name" value="Fumarase/aspartase (Central domain)"/>
    <property type="match status" value="1"/>
</dbReference>
<dbReference type="Gene3D" id="1.10.275.10">
    <property type="entry name" value="Fumarase/aspartase (N-terminal domain)"/>
    <property type="match status" value="1"/>
</dbReference>
<dbReference type="HAMAP" id="MF_00006">
    <property type="entry name" value="Arg_succ_lyase"/>
    <property type="match status" value="1"/>
</dbReference>
<dbReference type="InterPro" id="IPR029419">
    <property type="entry name" value="Arg_succ_lyase_C"/>
</dbReference>
<dbReference type="InterPro" id="IPR009049">
    <property type="entry name" value="Argininosuccinate_lyase"/>
</dbReference>
<dbReference type="InterPro" id="IPR024083">
    <property type="entry name" value="Fumarase/histidase_N"/>
</dbReference>
<dbReference type="InterPro" id="IPR020557">
    <property type="entry name" value="Fumarate_lyase_CS"/>
</dbReference>
<dbReference type="InterPro" id="IPR000362">
    <property type="entry name" value="Fumarate_lyase_fam"/>
</dbReference>
<dbReference type="InterPro" id="IPR022761">
    <property type="entry name" value="Fumarate_lyase_N"/>
</dbReference>
<dbReference type="InterPro" id="IPR008948">
    <property type="entry name" value="L-Aspartase-like"/>
</dbReference>
<dbReference type="NCBIfam" id="TIGR00838">
    <property type="entry name" value="argH"/>
    <property type="match status" value="1"/>
</dbReference>
<dbReference type="PANTHER" id="PTHR43814">
    <property type="entry name" value="ARGININOSUCCINATE LYASE"/>
    <property type="match status" value="1"/>
</dbReference>
<dbReference type="PANTHER" id="PTHR43814:SF1">
    <property type="entry name" value="ARGININOSUCCINATE LYASE"/>
    <property type="match status" value="1"/>
</dbReference>
<dbReference type="Pfam" id="PF14698">
    <property type="entry name" value="ASL_C2"/>
    <property type="match status" value="1"/>
</dbReference>
<dbReference type="Pfam" id="PF00206">
    <property type="entry name" value="Lyase_1"/>
    <property type="match status" value="1"/>
</dbReference>
<dbReference type="PRINTS" id="PR00145">
    <property type="entry name" value="ARGSUCLYASE"/>
</dbReference>
<dbReference type="PRINTS" id="PR00149">
    <property type="entry name" value="FUMRATELYASE"/>
</dbReference>
<dbReference type="SUPFAM" id="SSF48557">
    <property type="entry name" value="L-aspartase-like"/>
    <property type="match status" value="1"/>
</dbReference>
<dbReference type="PROSITE" id="PS00163">
    <property type="entry name" value="FUMARATE_LYASES"/>
    <property type="match status" value="1"/>
</dbReference>
<gene>
    <name evidence="1" type="primary">argH</name>
    <name type="ordered locus">Dred_0278</name>
</gene>
<accession>A4J174</accession>
<name>ARLY_DESRM</name>
<comment type="catalytic activity">
    <reaction evidence="1">
        <text>2-(N(omega)-L-arginino)succinate = fumarate + L-arginine</text>
        <dbReference type="Rhea" id="RHEA:24020"/>
        <dbReference type="ChEBI" id="CHEBI:29806"/>
        <dbReference type="ChEBI" id="CHEBI:32682"/>
        <dbReference type="ChEBI" id="CHEBI:57472"/>
        <dbReference type="EC" id="4.3.2.1"/>
    </reaction>
</comment>
<comment type="pathway">
    <text evidence="1">Amino-acid biosynthesis; L-arginine biosynthesis; L-arginine from L-ornithine and carbamoyl phosphate: step 3/3.</text>
</comment>
<comment type="subcellular location">
    <subcellularLocation>
        <location evidence="1">Cytoplasm</location>
    </subcellularLocation>
</comment>
<comment type="similarity">
    <text evidence="1">Belongs to the lyase 1 family. Argininosuccinate lyase subfamily.</text>
</comment>
<evidence type="ECO:0000255" key="1">
    <source>
        <dbReference type="HAMAP-Rule" id="MF_00006"/>
    </source>
</evidence>